<name>RL6_STRPZ</name>
<proteinExistence type="inferred from homology"/>
<sequence>MSRIGNKVITMPAGVELTNNNNVITVKGPKGELTREFNKNIEIKVEGTEITVVRPNDSKEMKTIHGTTRANLNNMVVGVSEGFKKDLEMKGVGYRAQLQGTKLVLSVGKSHQDEVEAPEGITFTVANPTSISVEGINKEVVGQTAAYIRSLRSPEPYKGKGIRYVGEYVRLKEGKTGK</sequence>
<gene>
    <name evidence="1" type="primary">rplF</name>
    <name type="ordered locus">Spy49_0062</name>
</gene>
<feature type="chain" id="PRO_1000144058" description="Large ribosomal subunit protein uL6">
    <location>
        <begin position="1"/>
        <end position="178"/>
    </location>
</feature>
<keyword id="KW-0687">Ribonucleoprotein</keyword>
<keyword id="KW-0689">Ribosomal protein</keyword>
<keyword id="KW-0694">RNA-binding</keyword>
<keyword id="KW-0699">rRNA-binding</keyword>
<dbReference type="EMBL" id="CP000829">
    <property type="protein sequence ID" value="ACI60419.1"/>
    <property type="molecule type" value="Genomic_DNA"/>
</dbReference>
<dbReference type="SMR" id="B5XJ51"/>
<dbReference type="KEGG" id="soz:Spy49_0062"/>
<dbReference type="HOGENOM" id="CLU_065464_1_2_9"/>
<dbReference type="Proteomes" id="UP000001039">
    <property type="component" value="Chromosome"/>
</dbReference>
<dbReference type="GO" id="GO:0022625">
    <property type="term" value="C:cytosolic large ribosomal subunit"/>
    <property type="evidence" value="ECO:0007669"/>
    <property type="project" value="TreeGrafter"/>
</dbReference>
<dbReference type="GO" id="GO:0019843">
    <property type="term" value="F:rRNA binding"/>
    <property type="evidence" value="ECO:0007669"/>
    <property type="project" value="UniProtKB-UniRule"/>
</dbReference>
<dbReference type="GO" id="GO:0003735">
    <property type="term" value="F:structural constituent of ribosome"/>
    <property type="evidence" value="ECO:0007669"/>
    <property type="project" value="InterPro"/>
</dbReference>
<dbReference type="GO" id="GO:0002181">
    <property type="term" value="P:cytoplasmic translation"/>
    <property type="evidence" value="ECO:0007669"/>
    <property type="project" value="TreeGrafter"/>
</dbReference>
<dbReference type="FunFam" id="3.90.930.12:FF:000001">
    <property type="entry name" value="50S ribosomal protein L6"/>
    <property type="match status" value="1"/>
</dbReference>
<dbReference type="FunFam" id="3.90.930.12:FF:000002">
    <property type="entry name" value="50S ribosomal protein L6"/>
    <property type="match status" value="1"/>
</dbReference>
<dbReference type="Gene3D" id="3.90.930.12">
    <property type="entry name" value="Ribosomal protein L6, alpha-beta domain"/>
    <property type="match status" value="2"/>
</dbReference>
<dbReference type="HAMAP" id="MF_01365_B">
    <property type="entry name" value="Ribosomal_uL6_B"/>
    <property type="match status" value="1"/>
</dbReference>
<dbReference type="InterPro" id="IPR000702">
    <property type="entry name" value="Ribosomal_uL6-like"/>
</dbReference>
<dbReference type="InterPro" id="IPR036789">
    <property type="entry name" value="Ribosomal_uL6-like_a/b-dom_sf"/>
</dbReference>
<dbReference type="InterPro" id="IPR020040">
    <property type="entry name" value="Ribosomal_uL6_a/b-dom"/>
</dbReference>
<dbReference type="InterPro" id="IPR019906">
    <property type="entry name" value="Ribosomal_uL6_bac-type"/>
</dbReference>
<dbReference type="InterPro" id="IPR002358">
    <property type="entry name" value="Ribosomal_uL6_CS"/>
</dbReference>
<dbReference type="NCBIfam" id="TIGR03654">
    <property type="entry name" value="L6_bact"/>
    <property type="match status" value="1"/>
</dbReference>
<dbReference type="PANTHER" id="PTHR11655">
    <property type="entry name" value="60S/50S RIBOSOMAL PROTEIN L6/L9"/>
    <property type="match status" value="1"/>
</dbReference>
<dbReference type="PANTHER" id="PTHR11655:SF14">
    <property type="entry name" value="LARGE RIBOSOMAL SUBUNIT PROTEIN UL6M"/>
    <property type="match status" value="1"/>
</dbReference>
<dbReference type="Pfam" id="PF00347">
    <property type="entry name" value="Ribosomal_L6"/>
    <property type="match status" value="2"/>
</dbReference>
<dbReference type="PIRSF" id="PIRSF002162">
    <property type="entry name" value="Ribosomal_L6"/>
    <property type="match status" value="1"/>
</dbReference>
<dbReference type="PRINTS" id="PR00059">
    <property type="entry name" value="RIBOSOMALL6"/>
</dbReference>
<dbReference type="SUPFAM" id="SSF56053">
    <property type="entry name" value="Ribosomal protein L6"/>
    <property type="match status" value="2"/>
</dbReference>
<dbReference type="PROSITE" id="PS00525">
    <property type="entry name" value="RIBOSOMAL_L6_1"/>
    <property type="match status" value="1"/>
</dbReference>
<comment type="function">
    <text evidence="1">This protein binds to the 23S rRNA, and is important in its secondary structure. It is located near the subunit interface in the base of the L7/L12 stalk, and near the tRNA binding site of the peptidyltransferase center.</text>
</comment>
<comment type="subunit">
    <text evidence="1">Part of the 50S ribosomal subunit.</text>
</comment>
<comment type="similarity">
    <text evidence="1">Belongs to the universal ribosomal protein uL6 family.</text>
</comment>
<reference key="1">
    <citation type="journal article" date="2008" name="J. Bacteriol.">
        <title>Genome sequence of a nephritogenic and highly transformable M49 strain of Streptococcus pyogenes.</title>
        <authorList>
            <person name="McShan W.M."/>
            <person name="Ferretti J.J."/>
            <person name="Karasawa T."/>
            <person name="Suvorov A.N."/>
            <person name="Lin S."/>
            <person name="Qin B."/>
            <person name="Jia H."/>
            <person name="Kenton S."/>
            <person name="Najar F."/>
            <person name="Wu H."/>
            <person name="Scott J."/>
            <person name="Roe B.A."/>
            <person name="Savic D.J."/>
        </authorList>
    </citation>
    <scope>NUCLEOTIDE SEQUENCE [LARGE SCALE GENOMIC DNA]</scope>
    <source>
        <strain>NZ131</strain>
    </source>
</reference>
<accession>B5XJ51</accession>
<protein>
    <recommendedName>
        <fullName evidence="1">Large ribosomal subunit protein uL6</fullName>
    </recommendedName>
    <alternativeName>
        <fullName evidence="2">50S ribosomal protein L6</fullName>
    </alternativeName>
</protein>
<organism>
    <name type="scientific">Streptococcus pyogenes serotype M49 (strain NZ131)</name>
    <dbReference type="NCBI Taxonomy" id="471876"/>
    <lineage>
        <taxon>Bacteria</taxon>
        <taxon>Bacillati</taxon>
        <taxon>Bacillota</taxon>
        <taxon>Bacilli</taxon>
        <taxon>Lactobacillales</taxon>
        <taxon>Streptococcaceae</taxon>
        <taxon>Streptococcus</taxon>
    </lineage>
</organism>
<evidence type="ECO:0000255" key="1">
    <source>
        <dbReference type="HAMAP-Rule" id="MF_01365"/>
    </source>
</evidence>
<evidence type="ECO:0000305" key="2"/>